<proteinExistence type="inferred from homology"/>
<reference key="1">
    <citation type="journal article" date="2001" name="Proc. Natl. Acad. Sci. U.S.A.">
        <title>The complete genome of the crenarchaeon Sulfolobus solfataricus P2.</title>
        <authorList>
            <person name="She Q."/>
            <person name="Singh R.K."/>
            <person name="Confalonieri F."/>
            <person name="Zivanovic Y."/>
            <person name="Allard G."/>
            <person name="Awayez M.J."/>
            <person name="Chan-Weiher C.C.-Y."/>
            <person name="Clausen I.G."/>
            <person name="Curtis B.A."/>
            <person name="De Moors A."/>
            <person name="Erauso G."/>
            <person name="Fletcher C."/>
            <person name="Gordon P.M.K."/>
            <person name="Heikamp-de Jong I."/>
            <person name="Jeffries A.C."/>
            <person name="Kozera C.J."/>
            <person name="Medina N."/>
            <person name="Peng X."/>
            <person name="Thi-Ngoc H.P."/>
            <person name="Redder P."/>
            <person name="Schenk M.E."/>
            <person name="Theriault C."/>
            <person name="Tolstrup N."/>
            <person name="Charlebois R.L."/>
            <person name="Doolittle W.F."/>
            <person name="Duguet M."/>
            <person name="Gaasterland T."/>
            <person name="Garrett R.A."/>
            <person name="Ragan M.A."/>
            <person name="Sensen C.W."/>
            <person name="Van der Oost J."/>
        </authorList>
    </citation>
    <scope>NUCLEOTIDE SEQUENCE [LARGE SCALE GENOMIC DNA]</scope>
    <source>
        <strain>ATCC 35092 / DSM 1617 / JCM 11322 / P2</strain>
    </source>
</reference>
<gene>
    <name evidence="1" type="primary">rpl10e</name>
    <name type="ordered locus">SSO0294</name>
</gene>
<dbReference type="EMBL" id="AE006641">
    <property type="protein sequence ID" value="AAK40634.1"/>
    <property type="molecule type" value="Genomic_DNA"/>
</dbReference>
<dbReference type="PIR" id="C90172">
    <property type="entry name" value="C90172"/>
</dbReference>
<dbReference type="RefSeq" id="WP_009990585.1">
    <property type="nucleotide sequence ID" value="NC_002754.1"/>
</dbReference>
<dbReference type="SMR" id="Q980J7"/>
<dbReference type="FunCoup" id="Q980J7">
    <property type="interactions" value="198"/>
</dbReference>
<dbReference type="STRING" id="273057.SSO0294"/>
<dbReference type="PaxDb" id="273057-SSO0294"/>
<dbReference type="EnsemblBacteria" id="AAK40634">
    <property type="protein sequence ID" value="AAK40634"/>
    <property type="gene ID" value="SSO0294"/>
</dbReference>
<dbReference type="KEGG" id="sso:SSO0294"/>
<dbReference type="PATRIC" id="fig|273057.12.peg.289"/>
<dbReference type="eggNOG" id="arCOG04113">
    <property type="taxonomic scope" value="Archaea"/>
</dbReference>
<dbReference type="HOGENOM" id="CLU_084051_0_2_2"/>
<dbReference type="InParanoid" id="Q980J7"/>
<dbReference type="PhylomeDB" id="Q980J7"/>
<dbReference type="Proteomes" id="UP000001974">
    <property type="component" value="Chromosome"/>
</dbReference>
<dbReference type="GO" id="GO:0022625">
    <property type="term" value="C:cytosolic large ribosomal subunit"/>
    <property type="evidence" value="ECO:0000318"/>
    <property type="project" value="GO_Central"/>
</dbReference>
<dbReference type="GO" id="GO:0003735">
    <property type="term" value="F:structural constituent of ribosome"/>
    <property type="evidence" value="ECO:0000318"/>
    <property type="project" value="GO_Central"/>
</dbReference>
<dbReference type="GO" id="GO:0006412">
    <property type="term" value="P:translation"/>
    <property type="evidence" value="ECO:0000318"/>
    <property type="project" value="GO_Central"/>
</dbReference>
<dbReference type="CDD" id="cd01433">
    <property type="entry name" value="Ribosomal_L16_L10e"/>
    <property type="match status" value="1"/>
</dbReference>
<dbReference type="FunFam" id="3.90.1170.10:FF:000008">
    <property type="entry name" value="50S ribosomal protein L10e"/>
    <property type="match status" value="1"/>
</dbReference>
<dbReference type="Gene3D" id="3.90.1170.10">
    <property type="entry name" value="Ribosomal protein L10e/L16"/>
    <property type="match status" value="1"/>
</dbReference>
<dbReference type="HAMAP" id="MF_00448">
    <property type="entry name" value="Ribosomal_uL16_arch"/>
    <property type="match status" value="1"/>
</dbReference>
<dbReference type="InterPro" id="IPR047873">
    <property type="entry name" value="Ribosomal_uL16"/>
</dbReference>
<dbReference type="InterPro" id="IPR022981">
    <property type="entry name" value="Ribosomal_uL16_arc"/>
</dbReference>
<dbReference type="InterPro" id="IPR018255">
    <property type="entry name" value="Ribosomal_uL16_CS_euk_arc"/>
</dbReference>
<dbReference type="InterPro" id="IPR016180">
    <property type="entry name" value="Ribosomal_uL16_dom"/>
</dbReference>
<dbReference type="InterPro" id="IPR001197">
    <property type="entry name" value="Ribosomal_uL16_euk_arch"/>
</dbReference>
<dbReference type="InterPro" id="IPR036920">
    <property type="entry name" value="Ribosomal_uL16_sf"/>
</dbReference>
<dbReference type="NCBIfam" id="NF003236">
    <property type="entry name" value="PRK04199.1-1"/>
    <property type="match status" value="1"/>
</dbReference>
<dbReference type="NCBIfam" id="NF003239">
    <property type="entry name" value="PRK04199.1-4"/>
    <property type="match status" value="1"/>
</dbReference>
<dbReference type="PANTHER" id="PTHR11726">
    <property type="entry name" value="60S RIBOSOMAL PROTEIN L10"/>
    <property type="match status" value="1"/>
</dbReference>
<dbReference type="Pfam" id="PF00252">
    <property type="entry name" value="Ribosomal_L16"/>
    <property type="match status" value="1"/>
</dbReference>
<dbReference type="PIRSF" id="PIRSF005590">
    <property type="entry name" value="Ribosomal_L10"/>
    <property type="match status" value="1"/>
</dbReference>
<dbReference type="SUPFAM" id="SSF54686">
    <property type="entry name" value="Ribosomal protein L16p/L10e"/>
    <property type="match status" value="1"/>
</dbReference>
<dbReference type="PROSITE" id="PS01257">
    <property type="entry name" value="RIBOSOMAL_L10E"/>
    <property type="match status" value="1"/>
</dbReference>
<sequence>MPLRPGRCYRHFSGPAYTRKEYIPGIPQPKITKFTSGNPNGDYDYEVRLITTEIGQIRHNALEAVRTLTLKTLSKKTGSETSFFMWILKYPHHVLRENKMMAFAGADRLQDGMRLSFGTPIGTAARIEKLGETLIVIKVKKEHLEFAKEALKIASKKLPLRTRIEIIPLRLVRQEVQS</sequence>
<feature type="chain" id="PRO_0000147148" description="Large ribosomal subunit protein uL16">
    <location>
        <begin position="1"/>
        <end position="178"/>
    </location>
</feature>
<organism>
    <name type="scientific">Saccharolobus solfataricus (strain ATCC 35092 / DSM 1617 / JCM 11322 / P2)</name>
    <name type="common">Sulfolobus solfataricus</name>
    <dbReference type="NCBI Taxonomy" id="273057"/>
    <lineage>
        <taxon>Archaea</taxon>
        <taxon>Thermoproteota</taxon>
        <taxon>Thermoprotei</taxon>
        <taxon>Sulfolobales</taxon>
        <taxon>Sulfolobaceae</taxon>
        <taxon>Saccharolobus</taxon>
    </lineage>
</organism>
<accession>Q980J7</accession>
<keyword id="KW-1185">Reference proteome</keyword>
<keyword id="KW-0687">Ribonucleoprotein</keyword>
<keyword id="KW-0689">Ribosomal protein</keyword>
<evidence type="ECO:0000255" key="1">
    <source>
        <dbReference type="HAMAP-Rule" id="MF_00448"/>
    </source>
</evidence>
<evidence type="ECO:0000305" key="2"/>
<name>RL10E_SACS2</name>
<protein>
    <recommendedName>
        <fullName evidence="1">Large ribosomal subunit protein uL16</fullName>
    </recommendedName>
    <alternativeName>
        <fullName evidence="2">50S ribosomal protein L10e</fullName>
    </alternativeName>
</protein>
<comment type="similarity">
    <text evidence="1">Belongs to the universal ribosomal protein uL16 family.</text>
</comment>